<proteinExistence type="inferred from homology"/>
<gene>
    <name evidence="1" type="primary">rpl2</name>
    <name type="ordered locus">MmarC7_0794</name>
</gene>
<protein>
    <recommendedName>
        <fullName evidence="1">Large ribosomal subunit protein uL2</fullName>
    </recommendedName>
    <alternativeName>
        <fullName evidence="3">50S ribosomal protein L2</fullName>
    </alternativeName>
</protein>
<evidence type="ECO:0000255" key="1">
    <source>
        <dbReference type="HAMAP-Rule" id="MF_01320"/>
    </source>
</evidence>
<evidence type="ECO:0000256" key="2">
    <source>
        <dbReference type="SAM" id="MobiDB-lite"/>
    </source>
</evidence>
<evidence type="ECO:0000305" key="3"/>
<accession>A6VHD5</accession>
<comment type="function">
    <text evidence="1">One of the primary rRNA binding proteins. Required for association of the 30S and 50S subunits to form the 70S ribosome, for tRNA binding and peptide bond formation. It has been suggested to have peptidyltransferase activity; this is somewhat controversial. Makes several contacts with the 16S rRNA in the 70S ribosome.</text>
</comment>
<comment type="subunit">
    <text evidence="1">Part of the 50S ribosomal subunit. Forms a bridge to the 30S subunit in the 70S ribosome.</text>
</comment>
<comment type="similarity">
    <text evidence="1">Belongs to the universal ribosomal protein uL2 family.</text>
</comment>
<keyword id="KW-0687">Ribonucleoprotein</keyword>
<keyword id="KW-0689">Ribosomal protein</keyword>
<keyword id="KW-0694">RNA-binding</keyword>
<keyword id="KW-0699">rRNA-binding</keyword>
<sequence>MGKRLISQNRGRGTPKYRSPTHKRKGAVKYRSYDEMEKDGKILGTVVDILHDPGRSAPVAKVRFANDEERLVLIPEGIQVGEEIECGISAEIKPGNVLPLGEIPEGIPVYNIETIPGDGGKLVRSGGCYAHVVSHDVGKTIVKLPSGFSKVLNPACRATVGVVAGGGRKEKPFVKAGKKHHSLSAKAIAWPKVRGVAMNAVDHPYGGGRHQHLGKPSSVSRHTSPGRKVGHIASRRTGRK</sequence>
<feature type="chain" id="PRO_1000051938" description="Large ribosomal subunit protein uL2">
    <location>
        <begin position="1"/>
        <end position="240"/>
    </location>
</feature>
<feature type="region of interest" description="Disordered" evidence="2">
    <location>
        <begin position="1"/>
        <end position="28"/>
    </location>
</feature>
<feature type="region of interest" description="Disordered" evidence="2">
    <location>
        <begin position="206"/>
        <end position="240"/>
    </location>
</feature>
<feature type="compositionally biased region" description="Polar residues" evidence="2">
    <location>
        <begin position="1"/>
        <end position="11"/>
    </location>
</feature>
<feature type="compositionally biased region" description="Basic residues" evidence="2">
    <location>
        <begin position="13"/>
        <end position="28"/>
    </location>
</feature>
<feature type="compositionally biased region" description="Basic residues" evidence="2">
    <location>
        <begin position="224"/>
        <end position="240"/>
    </location>
</feature>
<reference key="1">
    <citation type="submission" date="2007-06" db="EMBL/GenBank/DDBJ databases">
        <title>Complete sequence of Methanococcus maripaludis C7.</title>
        <authorList>
            <consortium name="US DOE Joint Genome Institute"/>
            <person name="Copeland A."/>
            <person name="Lucas S."/>
            <person name="Lapidus A."/>
            <person name="Barry K."/>
            <person name="Glavina del Rio T."/>
            <person name="Dalin E."/>
            <person name="Tice H."/>
            <person name="Pitluck S."/>
            <person name="Clum A."/>
            <person name="Schmutz J."/>
            <person name="Larimer F."/>
            <person name="Land M."/>
            <person name="Hauser L."/>
            <person name="Kyrpides N."/>
            <person name="Anderson I."/>
            <person name="Sieprawska-Lupa M."/>
            <person name="Whitman W.B."/>
            <person name="Richardson P."/>
        </authorList>
    </citation>
    <scope>NUCLEOTIDE SEQUENCE [LARGE SCALE GENOMIC DNA]</scope>
    <source>
        <strain>C7 / ATCC BAA-1331</strain>
    </source>
</reference>
<dbReference type="EMBL" id="CP000745">
    <property type="protein sequence ID" value="ABR65861.1"/>
    <property type="molecule type" value="Genomic_DNA"/>
</dbReference>
<dbReference type="SMR" id="A6VHD5"/>
<dbReference type="STRING" id="426368.MmarC7_0794"/>
<dbReference type="KEGG" id="mmz:MmarC7_0794"/>
<dbReference type="eggNOG" id="arCOG04067">
    <property type="taxonomic scope" value="Archaea"/>
</dbReference>
<dbReference type="HOGENOM" id="CLU_036235_0_3_2"/>
<dbReference type="OrthoDB" id="5987at2157"/>
<dbReference type="GO" id="GO:0022625">
    <property type="term" value="C:cytosolic large ribosomal subunit"/>
    <property type="evidence" value="ECO:0007669"/>
    <property type="project" value="TreeGrafter"/>
</dbReference>
<dbReference type="GO" id="GO:0019843">
    <property type="term" value="F:rRNA binding"/>
    <property type="evidence" value="ECO:0007669"/>
    <property type="project" value="UniProtKB-UniRule"/>
</dbReference>
<dbReference type="GO" id="GO:0003735">
    <property type="term" value="F:structural constituent of ribosome"/>
    <property type="evidence" value="ECO:0007669"/>
    <property type="project" value="InterPro"/>
</dbReference>
<dbReference type="GO" id="GO:0002181">
    <property type="term" value="P:cytoplasmic translation"/>
    <property type="evidence" value="ECO:0007669"/>
    <property type="project" value="TreeGrafter"/>
</dbReference>
<dbReference type="FunFam" id="2.40.50.140:FF:000020">
    <property type="entry name" value="60S ribosomal protein L2"/>
    <property type="match status" value="1"/>
</dbReference>
<dbReference type="FunFam" id="4.10.950.10:FF:000002">
    <property type="entry name" value="60S ribosomal protein L2"/>
    <property type="match status" value="1"/>
</dbReference>
<dbReference type="FunFam" id="2.30.30.30:FF:000006">
    <property type="entry name" value="60S ribosomal protein L8"/>
    <property type="match status" value="1"/>
</dbReference>
<dbReference type="Gene3D" id="2.30.30.30">
    <property type="match status" value="1"/>
</dbReference>
<dbReference type="Gene3D" id="2.40.50.140">
    <property type="entry name" value="Nucleic acid-binding proteins"/>
    <property type="match status" value="1"/>
</dbReference>
<dbReference type="Gene3D" id="4.10.950.10">
    <property type="entry name" value="Ribosomal protein L2, domain 3"/>
    <property type="match status" value="1"/>
</dbReference>
<dbReference type="HAMAP" id="MF_01320_A">
    <property type="entry name" value="Ribosomal_uL2_A"/>
    <property type="match status" value="1"/>
</dbReference>
<dbReference type="InterPro" id="IPR012340">
    <property type="entry name" value="NA-bd_OB-fold"/>
</dbReference>
<dbReference type="InterPro" id="IPR014722">
    <property type="entry name" value="Rib_uL2_dom2"/>
</dbReference>
<dbReference type="InterPro" id="IPR002171">
    <property type="entry name" value="Ribosomal_uL2"/>
</dbReference>
<dbReference type="InterPro" id="IPR023672">
    <property type="entry name" value="Ribosomal_uL2_arc_euk"/>
</dbReference>
<dbReference type="InterPro" id="IPR022669">
    <property type="entry name" value="Ribosomal_uL2_C"/>
</dbReference>
<dbReference type="InterPro" id="IPR022671">
    <property type="entry name" value="Ribosomal_uL2_CS"/>
</dbReference>
<dbReference type="InterPro" id="IPR014726">
    <property type="entry name" value="Ribosomal_uL2_dom3"/>
</dbReference>
<dbReference type="InterPro" id="IPR022666">
    <property type="entry name" value="Ribosomal_uL2_RNA-bd_dom"/>
</dbReference>
<dbReference type="InterPro" id="IPR008991">
    <property type="entry name" value="Translation_prot_SH3-like_sf"/>
</dbReference>
<dbReference type="NCBIfam" id="NF007180">
    <property type="entry name" value="PRK09612.1"/>
    <property type="match status" value="1"/>
</dbReference>
<dbReference type="PANTHER" id="PTHR13691:SF16">
    <property type="entry name" value="LARGE RIBOSOMAL SUBUNIT PROTEIN UL2"/>
    <property type="match status" value="1"/>
</dbReference>
<dbReference type="PANTHER" id="PTHR13691">
    <property type="entry name" value="RIBOSOMAL PROTEIN L2"/>
    <property type="match status" value="1"/>
</dbReference>
<dbReference type="Pfam" id="PF00181">
    <property type="entry name" value="Ribosomal_L2"/>
    <property type="match status" value="1"/>
</dbReference>
<dbReference type="Pfam" id="PF03947">
    <property type="entry name" value="Ribosomal_L2_C"/>
    <property type="match status" value="1"/>
</dbReference>
<dbReference type="PIRSF" id="PIRSF002158">
    <property type="entry name" value="Ribosomal_L2"/>
    <property type="match status" value="1"/>
</dbReference>
<dbReference type="SMART" id="SM01383">
    <property type="entry name" value="Ribosomal_L2"/>
    <property type="match status" value="1"/>
</dbReference>
<dbReference type="SMART" id="SM01382">
    <property type="entry name" value="Ribosomal_L2_C"/>
    <property type="match status" value="1"/>
</dbReference>
<dbReference type="SUPFAM" id="SSF50249">
    <property type="entry name" value="Nucleic acid-binding proteins"/>
    <property type="match status" value="1"/>
</dbReference>
<dbReference type="SUPFAM" id="SSF50104">
    <property type="entry name" value="Translation proteins SH3-like domain"/>
    <property type="match status" value="1"/>
</dbReference>
<dbReference type="PROSITE" id="PS00467">
    <property type="entry name" value="RIBOSOMAL_L2"/>
    <property type="match status" value="1"/>
</dbReference>
<organism>
    <name type="scientific">Methanococcus maripaludis (strain C7 / ATCC BAA-1331)</name>
    <dbReference type="NCBI Taxonomy" id="426368"/>
    <lineage>
        <taxon>Archaea</taxon>
        <taxon>Methanobacteriati</taxon>
        <taxon>Methanobacteriota</taxon>
        <taxon>Methanomada group</taxon>
        <taxon>Methanococci</taxon>
        <taxon>Methanococcales</taxon>
        <taxon>Methanococcaceae</taxon>
        <taxon>Methanococcus</taxon>
    </lineage>
</organism>
<name>RL2_METM7</name>